<dbReference type="EC" id="4.3.2.1" evidence="1"/>
<dbReference type="EMBL" id="CP000009">
    <property type="protein sequence ID" value="AAW61691.1"/>
    <property type="molecule type" value="Genomic_DNA"/>
</dbReference>
<dbReference type="RefSeq" id="WP_011253468.1">
    <property type="nucleotide sequence ID" value="NC_006677.1"/>
</dbReference>
<dbReference type="SMR" id="Q5FPK5"/>
<dbReference type="STRING" id="290633.GOX1955"/>
<dbReference type="KEGG" id="gox:GOX1955"/>
<dbReference type="eggNOG" id="COG0165">
    <property type="taxonomic scope" value="Bacteria"/>
</dbReference>
<dbReference type="HOGENOM" id="CLU_027272_2_3_5"/>
<dbReference type="UniPathway" id="UPA00068">
    <property type="reaction ID" value="UER00114"/>
</dbReference>
<dbReference type="Proteomes" id="UP000006375">
    <property type="component" value="Chromosome"/>
</dbReference>
<dbReference type="GO" id="GO:0005829">
    <property type="term" value="C:cytosol"/>
    <property type="evidence" value="ECO:0007669"/>
    <property type="project" value="TreeGrafter"/>
</dbReference>
<dbReference type="GO" id="GO:0004056">
    <property type="term" value="F:argininosuccinate lyase activity"/>
    <property type="evidence" value="ECO:0007669"/>
    <property type="project" value="UniProtKB-UniRule"/>
</dbReference>
<dbReference type="GO" id="GO:0042450">
    <property type="term" value="P:arginine biosynthetic process via ornithine"/>
    <property type="evidence" value="ECO:0007669"/>
    <property type="project" value="InterPro"/>
</dbReference>
<dbReference type="GO" id="GO:0006526">
    <property type="term" value="P:L-arginine biosynthetic process"/>
    <property type="evidence" value="ECO:0007669"/>
    <property type="project" value="UniProtKB-UniRule"/>
</dbReference>
<dbReference type="CDD" id="cd01359">
    <property type="entry name" value="Argininosuccinate_lyase"/>
    <property type="match status" value="1"/>
</dbReference>
<dbReference type="FunFam" id="1.10.275.10:FF:000002">
    <property type="entry name" value="Argininosuccinate lyase"/>
    <property type="match status" value="1"/>
</dbReference>
<dbReference type="FunFam" id="1.10.40.30:FF:000001">
    <property type="entry name" value="Argininosuccinate lyase"/>
    <property type="match status" value="1"/>
</dbReference>
<dbReference type="FunFam" id="1.20.200.10:FF:000015">
    <property type="entry name" value="argininosuccinate lyase isoform X2"/>
    <property type="match status" value="1"/>
</dbReference>
<dbReference type="Gene3D" id="1.10.40.30">
    <property type="entry name" value="Fumarase/aspartase (C-terminal domain)"/>
    <property type="match status" value="1"/>
</dbReference>
<dbReference type="Gene3D" id="1.20.200.10">
    <property type="entry name" value="Fumarase/aspartase (Central domain)"/>
    <property type="match status" value="1"/>
</dbReference>
<dbReference type="Gene3D" id="1.10.275.10">
    <property type="entry name" value="Fumarase/aspartase (N-terminal domain)"/>
    <property type="match status" value="1"/>
</dbReference>
<dbReference type="HAMAP" id="MF_00006">
    <property type="entry name" value="Arg_succ_lyase"/>
    <property type="match status" value="1"/>
</dbReference>
<dbReference type="InterPro" id="IPR029419">
    <property type="entry name" value="Arg_succ_lyase_C"/>
</dbReference>
<dbReference type="InterPro" id="IPR009049">
    <property type="entry name" value="Argininosuccinate_lyase"/>
</dbReference>
<dbReference type="InterPro" id="IPR024083">
    <property type="entry name" value="Fumarase/histidase_N"/>
</dbReference>
<dbReference type="InterPro" id="IPR020557">
    <property type="entry name" value="Fumarate_lyase_CS"/>
</dbReference>
<dbReference type="InterPro" id="IPR000362">
    <property type="entry name" value="Fumarate_lyase_fam"/>
</dbReference>
<dbReference type="InterPro" id="IPR022761">
    <property type="entry name" value="Fumarate_lyase_N"/>
</dbReference>
<dbReference type="InterPro" id="IPR008948">
    <property type="entry name" value="L-Aspartase-like"/>
</dbReference>
<dbReference type="NCBIfam" id="TIGR00838">
    <property type="entry name" value="argH"/>
    <property type="match status" value="1"/>
</dbReference>
<dbReference type="PANTHER" id="PTHR43814">
    <property type="entry name" value="ARGININOSUCCINATE LYASE"/>
    <property type="match status" value="1"/>
</dbReference>
<dbReference type="PANTHER" id="PTHR43814:SF1">
    <property type="entry name" value="ARGININOSUCCINATE LYASE"/>
    <property type="match status" value="1"/>
</dbReference>
<dbReference type="Pfam" id="PF14698">
    <property type="entry name" value="ASL_C2"/>
    <property type="match status" value="1"/>
</dbReference>
<dbReference type="Pfam" id="PF00206">
    <property type="entry name" value="Lyase_1"/>
    <property type="match status" value="1"/>
</dbReference>
<dbReference type="PRINTS" id="PR00145">
    <property type="entry name" value="ARGSUCLYASE"/>
</dbReference>
<dbReference type="PRINTS" id="PR00149">
    <property type="entry name" value="FUMRATELYASE"/>
</dbReference>
<dbReference type="SUPFAM" id="SSF48557">
    <property type="entry name" value="L-aspartase-like"/>
    <property type="match status" value="1"/>
</dbReference>
<dbReference type="PROSITE" id="PS00163">
    <property type="entry name" value="FUMARATE_LYASES"/>
    <property type="match status" value="1"/>
</dbReference>
<reference key="1">
    <citation type="journal article" date="2005" name="Nat. Biotechnol.">
        <title>Complete genome sequence of the acetic acid bacterium Gluconobacter oxydans.</title>
        <authorList>
            <person name="Prust C."/>
            <person name="Hoffmeister M."/>
            <person name="Liesegang H."/>
            <person name="Wiezer A."/>
            <person name="Fricke W.F."/>
            <person name="Ehrenreich A."/>
            <person name="Gottschalk G."/>
            <person name="Deppenmeier U."/>
        </authorList>
    </citation>
    <scope>NUCLEOTIDE SEQUENCE [LARGE SCALE GENOMIC DNA]</scope>
    <source>
        <strain>621H</strain>
    </source>
</reference>
<evidence type="ECO:0000255" key="1">
    <source>
        <dbReference type="HAMAP-Rule" id="MF_00006"/>
    </source>
</evidence>
<evidence type="ECO:0000256" key="2">
    <source>
        <dbReference type="SAM" id="MobiDB-lite"/>
    </source>
</evidence>
<proteinExistence type="inferred from homology"/>
<gene>
    <name evidence="1" type="primary">argH</name>
    <name type="ordered locus">GOX1955</name>
</gene>
<accession>Q5FPK5</accession>
<protein>
    <recommendedName>
        <fullName evidence="1">Argininosuccinate lyase</fullName>
        <shortName evidence="1">ASAL</shortName>
        <ecNumber evidence="1">4.3.2.1</ecNumber>
    </recommendedName>
    <alternativeName>
        <fullName evidence="1">Arginosuccinase</fullName>
    </alternativeName>
</protein>
<sequence>MKNAPVDTQSDAATSFEGTAANPQWGGRFASGPAAIMGEINASIGFDKILWRQDIRGSLAHAAMLQKVGLLTETELAEIRQGLGDIAQEIGEGRFEFSPALEDIHMNIEARLSERIGEAGKRLHTARSRNDQVATDFRLWVRDAIDGLQEQTASLMRSLATRALEHAATPMPGFTHLQVAQPVTFGHHLLAYVEMLSRDRGRLRDARARLNECPLGSAALAGTSFPIDRRMTAAALDFDRPTANSLDAVSDRDFALEFLSALSLQAMHLSRLAEEIVMWASAPFGFITLSDAFTTGSSIMPQKRNPDAAELVRAKIGRIMGDFVGLLTVMKGLPLAYAKDTQEDKEPVFDATEAMTLSLAAMDGMIRDLKANTTRMRAVAGMGFSTATDLADWLVRELRVPFRTAHHVTGRLVGMAEQKGCDLADLSLEEMQSVEPQINAGVFDVLTVEASLASRTSEGGTAPANVKHQAESWLAKLGETA</sequence>
<organism>
    <name type="scientific">Gluconobacter oxydans (strain 621H)</name>
    <name type="common">Gluconobacter suboxydans</name>
    <dbReference type="NCBI Taxonomy" id="290633"/>
    <lineage>
        <taxon>Bacteria</taxon>
        <taxon>Pseudomonadati</taxon>
        <taxon>Pseudomonadota</taxon>
        <taxon>Alphaproteobacteria</taxon>
        <taxon>Acetobacterales</taxon>
        <taxon>Acetobacteraceae</taxon>
        <taxon>Gluconobacter</taxon>
    </lineage>
</organism>
<name>ARLY_GLUOX</name>
<keyword id="KW-0028">Amino-acid biosynthesis</keyword>
<keyword id="KW-0055">Arginine biosynthesis</keyword>
<keyword id="KW-0963">Cytoplasm</keyword>
<keyword id="KW-0456">Lyase</keyword>
<keyword id="KW-1185">Reference proteome</keyword>
<feature type="chain" id="PRO_0000240733" description="Argininosuccinate lyase">
    <location>
        <begin position="1"/>
        <end position="481"/>
    </location>
</feature>
<feature type="region of interest" description="Disordered" evidence="2">
    <location>
        <begin position="1"/>
        <end position="25"/>
    </location>
</feature>
<feature type="compositionally biased region" description="Polar residues" evidence="2">
    <location>
        <begin position="1"/>
        <end position="17"/>
    </location>
</feature>
<comment type="catalytic activity">
    <reaction evidence="1">
        <text>2-(N(omega)-L-arginino)succinate = fumarate + L-arginine</text>
        <dbReference type="Rhea" id="RHEA:24020"/>
        <dbReference type="ChEBI" id="CHEBI:29806"/>
        <dbReference type="ChEBI" id="CHEBI:32682"/>
        <dbReference type="ChEBI" id="CHEBI:57472"/>
        <dbReference type="EC" id="4.3.2.1"/>
    </reaction>
</comment>
<comment type="pathway">
    <text evidence="1">Amino-acid biosynthesis; L-arginine biosynthesis; L-arginine from L-ornithine and carbamoyl phosphate: step 3/3.</text>
</comment>
<comment type="subcellular location">
    <subcellularLocation>
        <location evidence="1">Cytoplasm</location>
    </subcellularLocation>
</comment>
<comment type="similarity">
    <text evidence="1">Belongs to the lyase 1 family. Argininosuccinate lyase subfamily.</text>
</comment>